<accession>A1UUB6</accession>
<comment type="function">
    <text evidence="1">Formation of pseudouridine at positions 38, 39 and 40 in the anticodon stem and loop of transfer RNAs.</text>
</comment>
<comment type="catalytic activity">
    <reaction evidence="1">
        <text>uridine(38/39/40) in tRNA = pseudouridine(38/39/40) in tRNA</text>
        <dbReference type="Rhea" id="RHEA:22376"/>
        <dbReference type="Rhea" id="RHEA-COMP:10085"/>
        <dbReference type="Rhea" id="RHEA-COMP:10087"/>
        <dbReference type="ChEBI" id="CHEBI:65314"/>
        <dbReference type="ChEBI" id="CHEBI:65315"/>
        <dbReference type="EC" id="5.4.99.12"/>
    </reaction>
</comment>
<comment type="subunit">
    <text evidence="1">Homodimer.</text>
</comment>
<comment type="similarity">
    <text evidence="1">Belongs to the tRNA pseudouridine synthase TruA family.</text>
</comment>
<name>TRUA_BARBK</name>
<sequence length="247" mass="27935">MARFKLTLEYDGSNYAGWQRQAELRTVQGAVEQAIFHFSGQQLTITTAGRTDAGVHATGQVAHVDFEKDWHVNTIHNALNAHLRQQGDNIAILNVENIPDSFDARLSAVKRHYLFKILNRRAPPALNAKRVWWLPRPLNADAMHKAAQKLVGKHDFTTFRSAHCQAKSPIRTLECLDVQREGEEIFLYARARSFLHHQIRSFAGSLMEVGIGRWTAQDLEEALHAKDRARCGMVAPPSGLYLTQVDY</sequence>
<keyword id="KW-0413">Isomerase</keyword>
<keyword id="KW-0819">tRNA processing</keyword>
<protein>
    <recommendedName>
        <fullName evidence="1">tRNA pseudouridine synthase A</fullName>
        <ecNumber evidence="1">5.4.99.12</ecNumber>
    </recommendedName>
    <alternativeName>
        <fullName evidence="1">tRNA pseudouridine(38-40) synthase</fullName>
    </alternativeName>
    <alternativeName>
        <fullName evidence="1">tRNA pseudouridylate synthase I</fullName>
    </alternativeName>
    <alternativeName>
        <fullName evidence="1">tRNA-uridine isomerase I</fullName>
    </alternativeName>
</protein>
<feature type="chain" id="PRO_1000017041" description="tRNA pseudouridine synthase A">
    <location>
        <begin position="1"/>
        <end position="247"/>
    </location>
</feature>
<feature type="active site" description="Nucleophile" evidence="1">
    <location>
        <position position="52"/>
    </location>
</feature>
<feature type="binding site" evidence="1">
    <location>
        <position position="113"/>
    </location>
    <ligand>
        <name>substrate</name>
    </ligand>
</feature>
<dbReference type="EC" id="5.4.99.12" evidence="1"/>
<dbReference type="EMBL" id="CP000524">
    <property type="protein sequence ID" value="ABM45005.1"/>
    <property type="molecule type" value="Genomic_DNA"/>
</dbReference>
<dbReference type="RefSeq" id="WP_005768107.1">
    <property type="nucleotide sequence ID" value="NC_008783.1"/>
</dbReference>
<dbReference type="SMR" id="A1UUB6"/>
<dbReference type="STRING" id="360095.BARBAKC583_1321"/>
<dbReference type="GeneID" id="4684819"/>
<dbReference type="KEGG" id="bbk:BARBAKC583_1321"/>
<dbReference type="PATRIC" id="fig|360095.6.peg.1293"/>
<dbReference type="eggNOG" id="COG0101">
    <property type="taxonomic scope" value="Bacteria"/>
</dbReference>
<dbReference type="HOGENOM" id="CLU_014673_0_2_5"/>
<dbReference type="OrthoDB" id="9811823at2"/>
<dbReference type="Proteomes" id="UP000000643">
    <property type="component" value="Chromosome"/>
</dbReference>
<dbReference type="GO" id="GO:0003723">
    <property type="term" value="F:RNA binding"/>
    <property type="evidence" value="ECO:0007669"/>
    <property type="project" value="InterPro"/>
</dbReference>
<dbReference type="GO" id="GO:0160147">
    <property type="term" value="F:tRNA pseudouridine(38-40) synthase activity"/>
    <property type="evidence" value="ECO:0007669"/>
    <property type="project" value="UniProtKB-EC"/>
</dbReference>
<dbReference type="GO" id="GO:0031119">
    <property type="term" value="P:tRNA pseudouridine synthesis"/>
    <property type="evidence" value="ECO:0007669"/>
    <property type="project" value="UniProtKB-UniRule"/>
</dbReference>
<dbReference type="CDD" id="cd02570">
    <property type="entry name" value="PseudoU_synth_EcTruA"/>
    <property type="match status" value="1"/>
</dbReference>
<dbReference type="FunFam" id="3.30.70.580:FF:000001">
    <property type="entry name" value="tRNA pseudouridine synthase A"/>
    <property type="match status" value="1"/>
</dbReference>
<dbReference type="Gene3D" id="3.30.70.660">
    <property type="entry name" value="Pseudouridine synthase I, catalytic domain, C-terminal subdomain"/>
    <property type="match status" value="1"/>
</dbReference>
<dbReference type="Gene3D" id="3.30.70.580">
    <property type="entry name" value="Pseudouridine synthase I, catalytic domain, N-terminal subdomain"/>
    <property type="match status" value="1"/>
</dbReference>
<dbReference type="HAMAP" id="MF_00171">
    <property type="entry name" value="TruA"/>
    <property type="match status" value="1"/>
</dbReference>
<dbReference type="InterPro" id="IPR020103">
    <property type="entry name" value="PsdUridine_synth_cat_dom_sf"/>
</dbReference>
<dbReference type="InterPro" id="IPR001406">
    <property type="entry name" value="PsdUridine_synth_TruA"/>
</dbReference>
<dbReference type="InterPro" id="IPR020097">
    <property type="entry name" value="PsdUridine_synth_TruA_a/b_dom"/>
</dbReference>
<dbReference type="InterPro" id="IPR020095">
    <property type="entry name" value="PsdUridine_synth_TruA_C"/>
</dbReference>
<dbReference type="InterPro" id="IPR020094">
    <property type="entry name" value="TruA/RsuA/RluB/E/F_N"/>
</dbReference>
<dbReference type="NCBIfam" id="TIGR00071">
    <property type="entry name" value="hisT_truA"/>
    <property type="match status" value="1"/>
</dbReference>
<dbReference type="PANTHER" id="PTHR11142">
    <property type="entry name" value="PSEUDOURIDYLATE SYNTHASE"/>
    <property type="match status" value="1"/>
</dbReference>
<dbReference type="PANTHER" id="PTHR11142:SF0">
    <property type="entry name" value="TRNA PSEUDOURIDINE SYNTHASE-LIKE 1"/>
    <property type="match status" value="1"/>
</dbReference>
<dbReference type="Pfam" id="PF01416">
    <property type="entry name" value="PseudoU_synth_1"/>
    <property type="match status" value="2"/>
</dbReference>
<dbReference type="PIRSF" id="PIRSF001430">
    <property type="entry name" value="tRNA_psdUrid_synth"/>
    <property type="match status" value="1"/>
</dbReference>
<dbReference type="SUPFAM" id="SSF55120">
    <property type="entry name" value="Pseudouridine synthase"/>
    <property type="match status" value="1"/>
</dbReference>
<evidence type="ECO:0000255" key="1">
    <source>
        <dbReference type="HAMAP-Rule" id="MF_00171"/>
    </source>
</evidence>
<reference key="1">
    <citation type="submission" date="2006-12" db="EMBL/GenBank/DDBJ databases">
        <authorList>
            <person name="Hendrix L."/>
            <person name="Mohamoud Y."/>
            <person name="Radune D."/>
            <person name="Shvartsbeyn A."/>
            <person name="Daugherty S."/>
            <person name="Dodson R."/>
            <person name="Durkin A.S."/>
            <person name="Harkins D."/>
            <person name="Huot H."/>
            <person name="Kothari S.P."/>
            <person name="Madupu R."/>
            <person name="Li J."/>
            <person name="Nelson W.C."/>
            <person name="Shrivastava S."/>
            <person name="Giglio M.G."/>
            <person name="Haft D."/>
            <person name="Selengut J."/>
            <person name="Fraser-Ligget C."/>
            <person name="Seshadri R."/>
        </authorList>
    </citation>
    <scope>NUCLEOTIDE SEQUENCE [LARGE SCALE GENOMIC DNA]</scope>
    <source>
        <strain>ATCC 35685 / KC583 / Herrer 020/F12,63</strain>
    </source>
</reference>
<gene>
    <name evidence="1" type="primary">truA</name>
    <name type="ordered locus">BARBAKC583_1321</name>
</gene>
<organism>
    <name type="scientific">Bartonella bacilliformis (strain ATCC 35685 / KC583 / Herrer 020/F12,63)</name>
    <dbReference type="NCBI Taxonomy" id="360095"/>
    <lineage>
        <taxon>Bacteria</taxon>
        <taxon>Pseudomonadati</taxon>
        <taxon>Pseudomonadota</taxon>
        <taxon>Alphaproteobacteria</taxon>
        <taxon>Hyphomicrobiales</taxon>
        <taxon>Bartonellaceae</taxon>
        <taxon>Bartonella</taxon>
    </lineage>
</organism>
<proteinExistence type="inferred from homology"/>